<keyword id="KW-0067">ATP-binding</keyword>
<keyword id="KW-0460">Magnesium</keyword>
<keyword id="KW-0547">Nucleotide-binding</keyword>
<keyword id="KW-1185">Reference proteome</keyword>
<keyword id="KW-0808">Transferase</keyword>
<keyword id="KW-0819">tRNA processing</keyword>
<feature type="chain" id="PRO_0000377266" description="tRNA dimethylallyltransferase 2">
    <location>
        <begin position="1"/>
        <end position="302"/>
    </location>
</feature>
<feature type="region of interest" description="Interaction with substrate tRNA" evidence="1">
    <location>
        <begin position="31"/>
        <end position="34"/>
    </location>
</feature>
<feature type="region of interest" description="Interaction with substrate tRNA" evidence="1">
    <location>
        <begin position="154"/>
        <end position="158"/>
    </location>
</feature>
<feature type="binding site" evidence="1">
    <location>
        <begin position="6"/>
        <end position="13"/>
    </location>
    <ligand>
        <name>ATP</name>
        <dbReference type="ChEBI" id="CHEBI:30616"/>
    </ligand>
</feature>
<feature type="binding site" evidence="1">
    <location>
        <begin position="8"/>
        <end position="13"/>
    </location>
    <ligand>
        <name>substrate</name>
    </ligand>
</feature>
<feature type="site" description="Interaction with substrate tRNA" evidence="1">
    <location>
        <position position="100"/>
    </location>
</feature>
<accession>Q7MAW6</accession>
<reference key="1">
    <citation type="journal article" date="2003" name="J. Bacteriol.">
        <title>Complete genome sequence of the oral pathogenic bacterium Porphyromonas gingivalis strain W83.</title>
        <authorList>
            <person name="Nelson K.E."/>
            <person name="Fleischmann R.D."/>
            <person name="DeBoy R.T."/>
            <person name="Paulsen I.T."/>
            <person name="Fouts D.E."/>
            <person name="Eisen J.A."/>
            <person name="Daugherty S.C."/>
            <person name="Dodson R.J."/>
            <person name="Durkin A.S."/>
            <person name="Gwinn M.L."/>
            <person name="Haft D.H."/>
            <person name="Kolonay J.F."/>
            <person name="Nelson W.C."/>
            <person name="Mason T.M."/>
            <person name="Tallon L."/>
            <person name="Gray J."/>
            <person name="Granger D."/>
            <person name="Tettelin H."/>
            <person name="Dong H."/>
            <person name="Galvin J.L."/>
            <person name="Duncan M.J."/>
            <person name="Dewhirst F.E."/>
            <person name="Fraser C.M."/>
        </authorList>
    </citation>
    <scope>NUCLEOTIDE SEQUENCE [LARGE SCALE GENOMIC DNA]</scope>
    <source>
        <strain>ATCC BAA-308 / W83</strain>
    </source>
</reference>
<name>MIAA2_PORGI</name>
<evidence type="ECO:0000255" key="1">
    <source>
        <dbReference type="HAMAP-Rule" id="MF_00185"/>
    </source>
</evidence>
<comment type="function">
    <text evidence="1">Catalyzes the transfer of a dimethylallyl group onto the adenine at position 37 in tRNAs that read codons beginning with uridine, leading to the formation of N6-(dimethylallyl)adenosine (i(6)A).</text>
</comment>
<comment type="catalytic activity">
    <reaction evidence="1">
        <text>adenosine(37) in tRNA + dimethylallyl diphosphate = N(6)-dimethylallyladenosine(37) in tRNA + diphosphate</text>
        <dbReference type="Rhea" id="RHEA:26482"/>
        <dbReference type="Rhea" id="RHEA-COMP:10162"/>
        <dbReference type="Rhea" id="RHEA-COMP:10375"/>
        <dbReference type="ChEBI" id="CHEBI:33019"/>
        <dbReference type="ChEBI" id="CHEBI:57623"/>
        <dbReference type="ChEBI" id="CHEBI:74411"/>
        <dbReference type="ChEBI" id="CHEBI:74415"/>
        <dbReference type="EC" id="2.5.1.75"/>
    </reaction>
</comment>
<comment type="cofactor">
    <cofactor evidence="1">
        <name>Mg(2+)</name>
        <dbReference type="ChEBI" id="CHEBI:18420"/>
    </cofactor>
</comment>
<comment type="subunit">
    <text evidence="1">Monomer.</text>
</comment>
<comment type="similarity">
    <text evidence="1">Belongs to the IPP transferase family.</text>
</comment>
<sequence>MITILGPTACGKTRLAVSLAYRLETEIISADSRQIYRGMDIGTGKDLADYQVGGTTIPCHLIDIRPAGDKYNLFAYQHDFHQAYASILARGMDPILCGGTGMYIEAVLKGYHLPDVPPNPTLRDRLQGKSLTELTLILAAYGPLHNKTDVDSAQRAIRAIEIAEYIKNNPVESTEFPPIDSLIIGLDLDRDTRRKRITDRLHARMHEGMIEEVKGLLDSGIPAEDLIYYGLEYKFVTLYLTGQTDYESMFTGLETAIHQFAKRQMTWFRGMERRGFLIHWIDALLPADEQCEAVMKLYGANG</sequence>
<proteinExistence type="inferred from homology"/>
<protein>
    <recommendedName>
        <fullName evidence="1">tRNA dimethylallyltransferase 2</fullName>
        <ecNumber evidence="1">2.5.1.75</ecNumber>
    </recommendedName>
    <alternativeName>
        <fullName evidence="1">Dimethylallyl diphosphate:tRNA dimethylallyltransferase 2</fullName>
        <shortName evidence="1">DMAPP:tRNA dimethylallyltransferase 2</shortName>
        <shortName evidence="1">DMATase 2</shortName>
    </alternativeName>
    <alternativeName>
        <fullName evidence="1">Isopentenyl-diphosphate:tRNA isopentenyltransferase 2</fullName>
        <shortName evidence="1">IPP transferase 2</shortName>
        <shortName evidence="1">IPPT 2</shortName>
        <shortName evidence="1">IPTase 2</shortName>
    </alternativeName>
</protein>
<gene>
    <name evidence="1" type="primary">miaA2</name>
    <name type="ordered locus">PG_0522</name>
</gene>
<dbReference type="EC" id="2.5.1.75" evidence="1"/>
<dbReference type="EMBL" id="AE015924">
    <property type="protein sequence ID" value="AAQ65716.1"/>
    <property type="molecule type" value="Genomic_DNA"/>
</dbReference>
<dbReference type="RefSeq" id="WP_005875071.1">
    <property type="nucleotide sequence ID" value="NC_002950.2"/>
</dbReference>
<dbReference type="SMR" id="Q7MAW6"/>
<dbReference type="STRING" id="242619.PG_0522"/>
<dbReference type="EnsemblBacteria" id="AAQ65716">
    <property type="protein sequence ID" value="AAQ65716"/>
    <property type="gene ID" value="PG_0522"/>
</dbReference>
<dbReference type="KEGG" id="pgi:PG_0522"/>
<dbReference type="PATRIC" id="fig|242619.8.peg.478"/>
<dbReference type="eggNOG" id="COG0324">
    <property type="taxonomic scope" value="Bacteria"/>
</dbReference>
<dbReference type="HOGENOM" id="CLU_032616_0_1_10"/>
<dbReference type="BioCyc" id="PGIN242619:G1G02-481-MONOMER"/>
<dbReference type="Proteomes" id="UP000000588">
    <property type="component" value="Chromosome"/>
</dbReference>
<dbReference type="GO" id="GO:0005524">
    <property type="term" value="F:ATP binding"/>
    <property type="evidence" value="ECO:0007669"/>
    <property type="project" value="UniProtKB-UniRule"/>
</dbReference>
<dbReference type="GO" id="GO:0052381">
    <property type="term" value="F:tRNA dimethylallyltransferase activity"/>
    <property type="evidence" value="ECO:0007669"/>
    <property type="project" value="UniProtKB-UniRule"/>
</dbReference>
<dbReference type="GO" id="GO:0006400">
    <property type="term" value="P:tRNA modification"/>
    <property type="evidence" value="ECO:0007669"/>
    <property type="project" value="TreeGrafter"/>
</dbReference>
<dbReference type="Gene3D" id="3.40.50.300">
    <property type="entry name" value="P-loop containing nucleotide triphosphate hydrolases"/>
    <property type="match status" value="2"/>
</dbReference>
<dbReference type="HAMAP" id="MF_00185">
    <property type="entry name" value="IPP_trans"/>
    <property type="match status" value="1"/>
</dbReference>
<dbReference type="InterPro" id="IPR039657">
    <property type="entry name" value="Dimethylallyltransferase"/>
</dbReference>
<dbReference type="InterPro" id="IPR018022">
    <property type="entry name" value="IPT"/>
</dbReference>
<dbReference type="InterPro" id="IPR027417">
    <property type="entry name" value="P-loop_NTPase"/>
</dbReference>
<dbReference type="NCBIfam" id="TIGR00174">
    <property type="entry name" value="miaA"/>
    <property type="match status" value="1"/>
</dbReference>
<dbReference type="PANTHER" id="PTHR11088">
    <property type="entry name" value="TRNA DIMETHYLALLYLTRANSFERASE"/>
    <property type="match status" value="1"/>
</dbReference>
<dbReference type="PANTHER" id="PTHR11088:SF60">
    <property type="entry name" value="TRNA DIMETHYLALLYLTRANSFERASE"/>
    <property type="match status" value="1"/>
</dbReference>
<dbReference type="Pfam" id="PF01715">
    <property type="entry name" value="IPPT"/>
    <property type="match status" value="1"/>
</dbReference>
<dbReference type="SUPFAM" id="SSF52540">
    <property type="entry name" value="P-loop containing nucleoside triphosphate hydrolases"/>
    <property type="match status" value="2"/>
</dbReference>
<organism>
    <name type="scientific">Porphyromonas gingivalis (strain ATCC BAA-308 / W83)</name>
    <dbReference type="NCBI Taxonomy" id="242619"/>
    <lineage>
        <taxon>Bacteria</taxon>
        <taxon>Pseudomonadati</taxon>
        <taxon>Bacteroidota</taxon>
        <taxon>Bacteroidia</taxon>
        <taxon>Bacteroidales</taxon>
        <taxon>Porphyromonadaceae</taxon>
        <taxon>Porphyromonas</taxon>
    </lineage>
</organism>